<proteinExistence type="inferred from homology"/>
<gene>
    <name evidence="1" type="primary">clcA</name>
    <name evidence="1" type="synonym">eriC</name>
    <name type="ordered locus">CKO_03212</name>
</gene>
<sequence length="473" mass="50277">MNTDTPTFEAQQVVRLRRGDLIRRLLQRDKTPLAILLTAAVVGTVTGLIGVAFEKAVTWVQNLRIGALVQTADYAILVWPLAFILSALLAMVGYFLVRKFAPEAGGSGIPEIEGALEELRPVRWWRVLPVKFVGGMGTLGAGMVLGREGPTVQIGGNIGRMVLDLFRMRSAEARHTLLATGAAAGLSAAFNAPLAGILFIIEEMRPQFRYNLISIKAVFTGVIMSSIVFRIFNGEAPIIEVGKLSNAPVNTLWLYLILGMIFGCVGPLFNHLVLRTQDMFQRFHGGEIKKWVLMGGAIGGLCGILGLIEPEAAGGGFNLIPIAAAGNYSVGLLLFIFIARVLTTLLCFSSGAPGGIFAPMLALGTLLGTAFGMAAAACFPQYHLEAGTFAIAGMGALLAASVRAPLTGIVLVLEMTDNYQLILPMIITCLGATLLAQFMGGKPLYSTILARTLAKQDAEQAAKSQRSVAGENT</sequence>
<protein>
    <recommendedName>
        <fullName evidence="1">H(+)/Cl(-) exchange transporter ClcA</fullName>
    </recommendedName>
</protein>
<evidence type="ECO:0000255" key="1">
    <source>
        <dbReference type="HAMAP-Rule" id="MF_01128"/>
    </source>
</evidence>
<keyword id="KW-0050">Antiport</keyword>
<keyword id="KW-0997">Cell inner membrane</keyword>
<keyword id="KW-1003">Cell membrane</keyword>
<keyword id="KW-0868">Chloride</keyword>
<keyword id="KW-0406">Ion transport</keyword>
<keyword id="KW-0472">Membrane</keyword>
<keyword id="KW-1185">Reference proteome</keyword>
<keyword id="KW-0812">Transmembrane</keyword>
<keyword id="KW-1133">Transmembrane helix</keyword>
<keyword id="KW-0813">Transport</keyword>
<dbReference type="EMBL" id="CP000822">
    <property type="protein sequence ID" value="ABV14296.1"/>
    <property type="molecule type" value="Genomic_DNA"/>
</dbReference>
<dbReference type="RefSeq" id="WP_012134002.1">
    <property type="nucleotide sequence ID" value="NC_009792.1"/>
</dbReference>
<dbReference type="SMR" id="A8ALD3"/>
<dbReference type="STRING" id="290338.CKO_03212"/>
<dbReference type="TCDB" id="2.A.49.5.5">
    <property type="family name" value="the chloride carrier/channel (clc) family"/>
</dbReference>
<dbReference type="GeneID" id="45136994"/>
<dbReference type="KEGG" id="cko:CKO_03212"/>
<dbReference type="HOGENOM" id="CLU_015263_7_0_6"/>
<dbReference type="OrthoDB" id="9767361at2"/>
<dbReference type="Proteomes" id="UP000008148">
    <property type="component" value="Chromosome"/>
</dbReference>
<dbReference type="GO" id="GO:0005886">
    <property type="term" value="C:plasma membrane"/>
    <property type="evidence" value="ECO:0007669"/>
    <property type="project" value="UniProtKB-SubCell"/>
</dbReference>
<dbReference type="GO" id="GO:0015297">
    <property type="term" value="F:antiporter activity"/>
    <property type="evidence" value="ECO:0007669"/>
    <property type="project" value="UniProtKB-UniRule"/>
</dbReference>
<dbReference type="GO" id="GO:0005247">
    <property type="term" value="F:voltage-gated chloride channel activity"/>
    <property type="evidence" value="ECO:0007669"/>
    <property type="project" value="TreeGrafter"/>
</dbReference>
<dbReference type="CDD" id="cd01031">
    <property type="entry name" value="EriC"/>
    <property type="match status" value="1"/>
</dbReference>
<dbReference type="FunFam" id="1.10.3080.10:FF:000005">
    <property type="entry name" value="H(+)/Cl(-) exchange transporter ClcA"/>
    <property type="match status" value="1"/>
</dbReference>
<dbReference type="Gene3D" id="1.10.3080.10">
    <property type="entry name" value="Clc chloride channel"/>
    <property type="match status" value="1"/>
</dbReference>
<dbReference type="HAMAP" id="MF_01128">
    <property type="entry name" value="CLC_ClcA"/>
    <property type="match status" value="1"/>
</dbReference>
<dbReference type="InterPro" id="IPR023861">
    <property type="entry name" value="Cl-channel_ClcA"/>
</dbReference>
<dbReference type="InterPro" id="IPR014743">
    <property type="entry name" value="Cl-channel_core"/>
</dbReference>
<dbReference type="InterPro" id="IPR001807">
    <property type="entry name" value="ClC"/>
</dbReference>
<dbReference type="NCBIfam" id="NF003640">
    <property type="entry name" value="PRK05277.1"/>
    <property type="match status" value="1"/>
</dbReference>
<dbReference type="PANTHER" id="PTHR45711">
    <property type="entry name" value="CHLORIDE CHANNEL PROTEIN"/>
    <property type="match status" value="1"/>
</dbReference>
<dbReference type="PANTHER" id="PTHR45711:SF6">
    <property type="entry name" value="CHLORIDE CHANNEL PROTEIN"/>
    <property type="match status" value="1"/>
</dbReference>
<dbReference type="Pfam" id="PF00654">
    <property type="entry name" value="Voltage_CLC"/>
    <property type="match status" value="1"/>
</dbReference>
<dbReference type="PRINTS" id="PR00762">
    <property type="entry name" value="CLCHANNEL"/>
</dbReference>
<dbReference type="SUPFAM" id="SSF81340">
    <property type="entry name" value="Clc chloride channel"/>
    <property type="match status" value="1"/>
</dbReference>
<comment type="function">
    <text evidence="1">Proton-coupled chloride transporter. Functions as antiport system and exchanges two chloride ions for 1 proton. Probably acts as an electrical shunt for an outwardly-directed proton pump that is linked to amino acid decarboxylation, as part of the extreme acid resistance (XAR) response.</text>
</comment>
<comment type="catalytic activity">
    <reaction evidence="1">
        <text>2 chloride(in) + H(+)(out) = 2 chloride(out) + H(+)(in)</text>
        <dbReference type="Rhea" id="RHEA:29567"/>
        <dbReference type="ChEBI" id="CHEBI:15378"/>
        <dbReference type="ChEBI" id="CHEBI:17996"/>
    </reaction>
</comment>
<comment type="subunit">
    <text evidence="1">Homodimer.</text>
</comment>
<comment type="subcellular location">
    <subcellularLocation>
        <location evidence="1">Cell inner membrane</location>
        <topology evidence="1">Multi-pass membrane protein</topology>
    </subcellularLocation>
</comment>
<comment type="similarity">
    <text evidence="1">Belongs to the chloride channel (TC 2.A.49) family. ClcA subfamily.</text>
</comment>
<accession>A8ALD3</accession>
<reference key="1">
    <citation type="submission" date="2007-08" db="EMBL/GenBank/DDBJ databases">
        <authorList>
            <consortium name="The Citrobacter koseri Genome Sequencing Project"/>
            <person name="McClelland M."/>
            <person name="Sanderson E.K."/>
            <person name="Porwollik S."/>
            <person name="Spieth J."/>
            <person name="Clifton W.S."/>
            <person name="Latreille P."/>
            <person name="Courtney L."/>
            <person name="Wang C."/>
            <person name="Pepin K."/>
            <person name="Bhonagiri V."/>
            <person name="Nash W."/>
            <person name="Johnson M."/>
            <person name="Thiruvilangam P."/>
            <person name="Wilson R."/>
        </authorList>
    </citation>
    <scope>NUCLEOTIDE SEQUENCE [LARGE SCALE GENOMIC DNA]</scope>
    <source>
        <strain>ATCC BAA-895 / CDC 4225-83 / SGSC4696</strain>
    </source>
</reference>
<name>CLCA_CITK8</name>
<feature type="chain" id="PRO_1000065376" description="H(+)/Cl(-) exchange transporter ClcA">
    <location>
        <begin position="1"/>
        <end position="473"/>
    </location>
</feature>
<feature type="topological domain" description="Cytoplasmic" evidence="1">
    <location>
        <begin position="1"/>
        <end position="32"/>
    </location>
</feature>
<feature type="transmembrane region" description="Helical" evidence="1">
    <location>
        <begin position="33"/>
        <end position="69"/>
    </location>
</feature>
<feature type="topological domain" description="Periplasmic" evidence="1">
    <location>
        <begin position="70"/>
        <end position="76"/>
    </location>
</feature>
<feature type="transmembrane region" description="Helical" evidence="1">
    <location>
        <begin position="77"/>
        <end position="100"/>
    </location>
</feature>
<feature type="topological domain" description="Cytoplasmic" evidence="1">
    <location>
        <begin position="101"/>
        <end position="108"/>
    </location>
</feature>
<feature type="intramembrane region" description="Helical" evidence="1">
    <location>
        <begin position="109"/>
        <end position="116"/>
    </location>
</feature>
<feature type="topological domain" description="Cytoplasmic" evidence="1">
    <location>
        <begin position="117"/>
        <end position="123"/>
    </location>
</feature>
<feature type="transmembrane region" description="Helical" evidence="1">
    <location>
        <begin position="124"/>
        <end position="141"/>
    </location>
</feature>
<feature type="topological domain" description="Periplasmic" evidence="1">
    <location>
        <begin position="142"/>
        <end position="147"/>
    </location>
</feature>
<feature type="transmembrane region" description="Helical" evidence="1">
    <location>
        <begin position="148"/>
        <end position="166"/>
    </location>
</feature>
<feature type="topological domain" description="Cytoplasmic" evidence="1">
    <location>
        <begin position="167"/>
        <end position="176"/>
    </location>
</feature>
<feature type="intramembrane region" description="Helical" evidence="1">
    <location>
        <begin position="177"/>
        <end position="189"/>
    </location>
</feature>
<feature type="intramembrane region" description="Helical" evidence="1">
    <location>
        <begin position="193"/>
        <end position="201"/>
    </location>
</feature>
<feature type="topological domain" description="Cytoplasmic" evidence="1">
    <location>
        <begin position="202"/>
        <end position="214"/>
    </location>
</feature>
<feature type="transmembrane region" description="Helical" evidence="1">
    <location>
        <begin position="215"/>
        <end position="232"/>
    </location>
</feature>
<feature type="topological domain" description="Periplasmic" evidence="1">
    <location>
        <begin position="233"/>
        <end position="252"/>
    </location>
</feature>
<feature type="transmembrane region" description="Helical" evidence="1">
    <location>
        <begin position="253"/>
        <end position="281"/>
    </location>
</feature>
<feature type="topological domain" description="Cytoplasmic" evidence="1">
    <location>
        <begin position="282"/>
        <end position="287"/>
    </location>
</feature>
<feature type="transmembrane region" description="Helical" evidence="1">
    <location>
        <begin position="288"/>
        <end position="309"/>
    </location>
</feature>
<feature type="topological domain" description="Periplasmic" evidence="1">
    <location>
        <begin position="310"/>
        <end position="329"/>
    </location>
</feature>
<feature type="transmembrane region" description="Helical" evidence="1">
    <location>
        <begin position="330"/>
        <end position="349"/>
    </location>
</feature>
<feature type="topological domain" description="Cytoplasmic" evidence="1">
    <location>
        <begin position="350"/>
        <end position="354"/>
    </location>
</feature>
<feature type="transmembrane region" description="Helical" evidence="1">
    <location>
        <begin position="355"/>
        <end position="376"/>
    </location>
</feature>
<feature type="topological domain" description="Periplasmic" evidence="1">
    <location>
        <begin position="377"/>
        <end position="386"/>
    </location>
</feature>
<feature type="intramembrane region" description="Helical" evidence="1">
    <location>
        <begin position="387"/>
        <end position="401"/>
    </location>
</feature>
<feature type="intramembrane region" description="Note=Loop between two helices" evidence="1">
    <location>
        <begin position="402"/>
        <end position="404"/>
    </location>
</feature>
<feature type="intramembrane region" description="Helical" evidence="1">
    <location>
        <begin position="405"/>
        <end position="416"/>
    </location>
</feature>
<feature type="intramembrane region" description="Note=Loop between two helices" evidence="1">
    <location>
        <begin position="417"/>
        <end position="421"/>
    </location>
</feature>
<feature type="transmembrane region" description="Helical" evidence="1">
    <location>
        <begin position="422"/>
        <end position="438"/>
    </location>
</feature>
<feature type="topological domain" description="Cytoplasmic" evidence="1">
    <location>
        <begin position="439"/>
        <end position="473"/>
    </location>
</feature>
<feature type="short sequence motif" description="Selectivity filter part_1" evidence="1">
    <location>
        <begin position="106"/>
        <end position="110"/>
    </location>
</feature>
<feature type="short sequence motif" description="Selectivity filter part_2" evidence="1">
    <location>
        <begin position="146"/>
        <end position="150"/>
    </location>
</feature>
<feature type="short sequence motif" description="Selectivity filter part_3" evidence="1">
    <location>
        <begin position="355"/>
        <end position="359"/>
    </location>
</feature>
<feature type="binding site" evidence="1">
    <location>
        <position position="107"/>
    </location>
    <ligand>
        <name>chloride</name>
        <dbReference type="ChEBI" id="CHEBI:17996"/>
    </ligand>
</feature>
<feature type="binding site" evidence="1">
    <location>
        <position position="356"/>
    </location>
    <ligand>
        <name>chloride</name>
        <dbReference type="ChEBI" id="CHEBI:17996"/>
    </ligand>
</feature>
<feature type="binding site" evidence="1">
    <location>
        <position position="357"/>
    </location>
    <ligand>
        <name>chloride</name>
        <dbReference type="ChEBI" id="CHEBI:17996"/>
    </ligand>
</feature>
<feature type="binding site" evidence="1">
    <location>
        <position position="445"/>
    </location>
    <ligand>
        <name>chloride</name>
        <dbReference type="ChEBI" id="CHEBI:17996"/>
    </ligand>
</feature>
<feature type="site" description="Mediates proton transfer from the outer aqueous phase to the interior of the protein; involved in linking H(+) and Cl(-) transport" evidence="1">
    <location>
        <position position="148"/>
    </location>
</feature>
<feature type="site" description="Mediates proton transfer from the protein to the inner aqueous phase" evidence="1">
    <location>
        <position position="203"/>
    </location>
</feature>
<organism>
    <name type="scientific">Citrobacter koseri (strain ATCC BAA-895 / CDC 4225-83 / SGSC4696)</name>
    <dbReference type="NCBI Taxonomy" id="290338"/>
    <lineage>
        <taxon>Bacteria</taxon>
        <taxon>Pseudomonadati</taxon>
        <taxon>Pseudomonadota</taxon>
        <taxon>Gammaproteobacteria</taxon>
        <taxon>Enterobacterales</taxon>
        <taxon>Enterobacteriaceae</taxon>
        <taxon>Citrobacter</taxon>
    </lineage>
</organism>